<sequence length="697" mass="75244">MSMFNIVRKEFQFGQHQVVLETGRVARQANTVLITMGGVTVLVAVVAAPTAKAGQDFFPLTVNYQEKQYAAGRIPGGYGKREGRASEAETLISRLIDRPIRPLFPEGYYNEIQVTATVVSSDKTMEADIAAMLGTSAALAIAGTPFRGPIGAARVGLINGEYVLNPNFEQMAQSDLDLVVAGTESAVLMVESEAKELSEDQMLGAVLFGHDEMQIAIQAINEFAAAAGAKPSDWVAPAHNEELRAKLKEAFEAKISEAYTIAVKQDRYAALDALHAEAVAQFVPEEDVDGIADEVDYLFEDLKYRTVRDNILSGKPRIDGRDTKTVRALDVQVGVLERAHGSALFTRGETQALVTTTLGNTRDALMVDTLAGTKTDNFMLHYNFPAYSVGETGRESGPKRREIGHGRLARRGVQAVLPAADRFPYVIRIVSDITESNGSSSMASVCGASLSLMDAGVPLKAPVAGIAMGLVKEGERFAVLSDILGDEDHLGDMDFKVAGSANGITALQMDIKIEGITEEIMEVALNQAFAGRMHILNEMNKVISRARPEISMHAPTFEVITINPDKIRDVIGKGGATIRQITEETKAAIDIEDNGTVRVFGETKAAAKAAIAKIQAITAEVEPGKIYDGKVIRIVEFGAFVNIMPGTDGLLHISQISNERIANVTDVLKEGQEVKVQVQDVDNRGRIKLTMKDIEQA</sequence>
<comment type="function">
    <text evidence="1">Involved in mRNA degradation. Catalyzes the phosphorolysis of single-stranded polyribonucleotides processively in the 3'- to 5'-direction.</text>
</comment>
<comment type="catalytic activity">
    <reaction evidence="1">
        <text>RNA(n+1) + phosphate = RNA(n) + a ribonucleoside 5'-diphosphate</text>
        <dbReference type="Rhea" id="RHEA:22096"/>
        <dbReference type="Rhea" id="RHEA-COMP:14527"/>
        <dbReference type="Rhea" id="RHEA-COMP:17342"/>
        <dbReference type="ChEBI" id="CHEBI:43474"/>
        <dbReference type="ChEBI" id="CHEBI:57930"/>
        <dbReference type="ChEBI" id="CHEBI:140395"/>
        <dbReference type="EC" id="2.7.7.8"/>
    </reaction>
</comment>
<comment type="cofactor">
    <cofactor evidence="1">
        <name>Mg(2+)</name>
        <dbReference type="ChEBI" id="CHEBI:18420"/>
    </cofactor>
</comment>
<comment type="subunit">
    <text evidence="1">Component of the RNA degradosome, which is a multiprotein complex involved in RNA processing and mRNA degradation.</text>
</comment>
<comment type="subcellular location">
    <subcellularLocation>
        <location evidence="1">Cytoplasm</location>
    </subcellularLocation>
</comment>
<comment type="similarity">
    <text evidence="1">Belongs to the polyribonucleotide nucleotidyltransferase family.</text>
</comment>
<gene>
    <name evidence="1" type="primary">pnp</name>
    <name type="ordered locus">A1S_0361</name>
</gene>
<protein>
    <recommendedName>
        <fullName evidence="1">Polyribonucleotide nucleotidyltransferase</fullName>
        <ecNumber evidence="1">2.7.7.8</ecNumber>
    </recommendedName>
    <alternativeName>
        <fullName evidence="1">Polynucleotide phosphorylase</fullName>
        <shortName evidence="1">PNPase</shortName>
    </alternativeName>
</protein>
<keyword id="KW-0963">Cytoplasm</keyword>
<keyword id="KW-0460">Magnesium</keyword>
<keyword id="KW-0479">Metal-binding</keyword>
<keyword id="KW-0548">Nucleotidyltransferase</keyword>
<keyword id="KW-0694">RNA-binding</keyword>
<keyword id="KW-0808">Transferase</keyword>
<feature type="chain" id="PRO_0000329482" description="Polyribonucleotide nucleotidyltransferase">
    <location>
        <begin position="1"/>
        <end position="697"/>
    </location>
</feature>
<feature type="domain" description="KH" evidence="1">
    <location>
        <begin position="555"/>
        <end position="614"/>
    </location>
</feature>
<feature type="domain" description="S1 motif" evidence="1">
    <location>
        <begin position="624"/>
        <end position="692"/>
    </location>
</feature>
<feature type="binding site" evidence="1">
    <location>
        <position position="488"/>
    </location>
    <ligand>
        <name>Mg(2+)</name>
        <dbReference type="ChEBI" id="CHEBI:18420"/>
    </ligand>
</feature>
<feature type="binding site" evidence="1">
    <location>
        <position position="494"/>
    </location>
    <ligand>
        <name>Mg(2+)</name>
        <dbReference type="ChEBI" id="CHEBI:18420"/>
    </ligand>
</feature>
<evidence type="ECO:0000255" key="1">
    <source>
        <dbReference type="HAMAP-Rule" id="MF_01595"/>
    </source>
</evidence>
<name>PNP_ACIBT</name>
<proteinExistence type="inferred from homology"/>
<accession>A3M1M7</accession>
<dbReference type="EC" id="2.7.7.8" evidence="1"/>
<dbReference type="EMBL" id="CP000521">
    <property type="protein sequence ID" value="ABO10821.2"/>
    <property type="molecule type" value="Genomic_DNA"/>
</dbReference>
<dbReference type="SMR" id="A3M1M7"/>
<dbReference type="KEGG" id="acb:A1S_0361"/>
<dbReference type="HOGENOM" id="CLU_004217_2_2_6"/>
<dbReference type="GO" id="GO:0005829">
    <property type="term" value="C:cytosol"/>
    <property type="evidence" value="ECO:0007669"/>
    <property type="project" value="TreeGrafter"/>
</dbReference>
<dbReference type="GO" id="GO:0000175">
    <property type="term" value="F:3'-5'-RNA exonuclease activity"/>
    <property type="evidence" value="ECO:0007669"/>
    <property type="project" value="TreeGrafter"/>
</dbReference>
<dbReference type="GO" id="GO:0000287">
    <property type="term" value="F:magnesium ion binding"/>
    <property type="evidence" value="ECO:0007669"/>
    <property type="project" value="UniProtKB-UniRule"/>
</dbReference>
<dbReference type="GO" id="GO:0004654">
    <property type="term" value="F:polyribonucleotide nucleotidyltransferase activity"/>
    <property type="evidence" value="ECO:0007669"/>
    <property type="project" value="UniProtKB-UniRule"/>
</dbReference>
<dbReference type="GO" id="GO:0003723">
    <property type="term" value="F:RNA binding"/>
    <property type="evidence" value="ECO:0007669"/>
    <property type="project" value="UniProtKB-UniRule"/>
</dbReference>
<dbReference type="GO" id="GO:0006402">
    <property type="term" value="P:mRNA catabolic process"/>
    <property type="evidence" value="ECO:0007669"/>
    <property type="project" value="UniProtKB-UniRule"/>
</dbReference>
<dbReference type="GO" id="GO:0006396">
    <property type="term" value="P:RNA processing"/>
    <property type="evidence" value="ECO:0007669"/>
    <property type="project" value="InterPro"/>
</dbReference>
<dbReference type="CDD" id="cd02393">
    <property type="entry name" value="KH-I_PNPase"/>
    <property type="match status" value="1"/>
</dbReference>
<dbReference type="CDD" id="cd11363">
    <property type="entry name" value="RNase_PH_PNPase_1"/>
    <property type="match status" value="1"/>
</dbReference>
<dbReference type="CDD" id="cd11364">
    <property type="entry name" value="RNase_PH_PNPase_2"/>
    <property type="match status" value="1"/>
</dbReference>
<dbReference type="CDD" id="cd04472">
    <property type="entry name" value="S1_PNPase"/>
    <property type="match status" value="1"/>
</dbReference>
<dbReference type="FunFam" id="2.40.50.140:FF:000023">
    <property type="entry name" value="Polyribonucleotide nucleotidyltransferase"/>
    <property type="match status" value="1"/>
</dbReference>
<dbReference type="FunFam" id="3.30.1370.10:FF:000001">
    <property type="entry name" value="Polyribonucleotide nucleotidyltransferase"/>
    <property type="match status" value="1"/>
</dbReference>
<dbReference type="FunFam" id="3.30.230.70:FF:000001">
    <property type="entry name" value="Polyribonucleotide nucleotidyltransferase"/>
    <property type="match status" value="1"/>
</dbReference>
<dbReference type="FunFam" id="3.30.230.70:FF:000002">
    <property type="entry name" value="Polyribonucleotide nucleotidyltransferase"/>
    <property type="match status" value="1"/>
</dbReference>
<dbReference type="Gene3D" id="3.30.230.70">
    <property type="entry name" value="GHMP Kinase, N-terminal domain"/>
    <property type="match status" value="2"/>
</dbReference>
<dbReference type="Gene3D" id="3.30.1370.10">
    <property type="entry name" value="K Homology domain, type 1"/>
    <property type="match status" value="1"/>
</dbReference>
<dbReference type="Gene3D" id="2.40.50.140">
    <property type="entry name" value="Nucleic acid-binding proteins"/>
    <property type="match status" value="1"/>
</dbReference>
<dbReference type="HAMAP" id="MF_01595">
    <property type="entry name" value="PNPase"/>
    <property type="match status" value="1"/>
</dbReference>
<dbReference type="InterPro" id="IPR001247">
    <property type="entry name" value="ExoRNase_PH_dom1"/>
</dbReference>
<dbReference type="InterPro" id="IPR015847">
    <property type="entry name" value="ExoRNase_PH_dom2"/>
</dbReference>
<dbReference type="InterPro" id="IPR036345">
    <property type="entry name" value="ExoRNase_PH_dom2_sf"/>
</dbReference>
<dbReference type="InterPro" id="IPR004087">
    <property type="entry name" value="KH_dom"/>
</dbReference>
<dbReference type="InterPro" id="IPR004088">
    <property type="entry name" value="KH_dom_type_1"/>
</dbReference>
<dbReference type="InterPro" id="IPR036612">
    <property type="entry name" value="KH_dom_type_1_sf"/>
</dbReference>
<dbReference type="InterPro" id="IPR012340">
    <property type="entry name" value="NA-bd_OB-fold"/>
</dbReference>
<dbReference type="InterPro" id="IPR012162">
    <property type="entry name" value="PNPase"/>
</dbReference>
<dbReference type="InterPro" id="IPR027408">
    <property type="entry name" value="PNPase/RNase_PH_dom_sf"/>
</dbReference>
<dbReference type="InterPro" id="IPR015848">
    <property type="entry name" value="PNPase_PH_RNA-bd_bac/org-type"/>
</dbReference>
<dbReference type="InterPro" id="IPR036456">
    <property type="entry name" value="PNPase_PH_RNA-bd_sf"/>
</dbReference>
<dbReference type="InterPro" id="IPR020568">
    <property type="entry name" value="Ribosomal_Su5_D2-typ_SF"/>
</dbReference>
<dbReference type="InterPro" id="IPR003029">
    <property type="entry name" value="S1_domain"/>
</dbReference>
<dbReference type="NCBIfam" id="TIGR03591">
    <property type="entry name" value="polynuc_phos"/>
    <property type="match status" value="1"/>
</dbReference>
<dbReference type="NCBIfam" id="NF008805">
    <property type="entry name" value="PRK11824.1"/>
    <property type="match status" value="1"/>
</dbReference>
<dbReference type="PANTHER" id="PTHR11252">
    <property type="entry name" value="POLYRIBONUCLEOTIDE NUCLEOTIDYLTRANSFERASE"/>
    <property type="match status" value="1"/>
</dbReference>
<dbReference type="PANTHER" id="PTHR11252:SF0">
    <property type="entry name" value="POLYRIBONUCLEOTIDE NUCLEOTIDYLTRANSFERASE 1, MITOCHONDRIAL"/>
    <property type="match status" value="1"/>
</dbReference>
<dbReference type="Pfam" id="PF00013">
    <property type="entry name" value="KH_1"/>
    <property type="match status" value="1"/>
</dbReference>
<dbReference type="Pfam" id="PF03726">
    <property type="entry name" value="PNPase"/>
    <property type="match status" value="1"/>
</dbReference>
<dbReference type="Pfam" id="PF01138">
    <property type="entry name" value="RNase_PH"/>
    <property type="match status" value="2"/>
</dbReference>
<dbReference type="Pfam" id="PF03725">
    <property type="entry name" value="RNase_PH_C"/>
    <property type="match status" value="2"/>
</dbReference>
<dbReference type="Pfam" id="PF00575">
    <property type="entry name" value="S1"/>
    <property type="match status" value="1"/>
</dbReference>
<dbReference type="PIRSF" id="PIRSF005499">
    <property type="entry name" value="PNPase"/>
    <property type="match status" value="1"/>
</dbReference>
<dbReference type="SMART" id="SM00322">
    <property type="entry name" value="KH"/>
    <property type="match status" value="1"/>
</dbReference>
<dbReference type="SMART" id="SM00316">
    <property type="entry name" value="S1"/>
    <property type="match status" value="1"/>
</dbReference>
<dbReference type="SUPFAM" id="SSF54791">
    <property type="entry name" value="Eukaryotic type KH-domain (KH-domain type I)"/>
    <property type="match status" value="1"/>
</dbReference>
<dbReference type="SUPFAM" id="SSF50249">
    <property type="entry name" value="Nucleic acid-binding proteins"/>
    <property type="match status" value="1"/>
</dbReference>
<dbReference type="SUPFAM" id="SSF46915">
    <property type="entry name" value="Polynucleotide phosphorylase/guanosine pentaphosphate synthase (PNPase/GPSI), domain 3"/>
    <property type="match status" value="1"/>
</dbReference>
<dbReference type="SUPFAM" id="SSF55666">
    <property type="entry name" value="Ribonuclease PH domain 2-like"/>
    <property type="match status" value="2"/>
</dbReference>
<dbReference type="SUPFAM" id="SSF54211">
    <property type="entry name" value="Ribosomal protein S5 domain 2-like"/>
    <property type="match status" value="2"/>
</dbReference>
<dbReference type="PROSITE" id="PS50084">
    <property type="entry name" value="KH_TYPE_1"/>
    <property type="match status" value="1"/>
</dbReference>
<dbReference type="PROSITE" id="PS50126">
    <property type="entry name" value="S1"/>
    <property type="match status" value="1"/>
</dbReference>
<organism>
    <name type="scientific">Acinetobacter baumannii (strain ATCC 17978 / DSM 105126 / CIP 53.77 / LMG 1025 / NCDC KC755 / 5377)</name>
    <dbReference type="NCBI Taxonomy" id="400667"/>
    <lineage>
        <taxon>Bacteria</taxon>
        <taxon>Pseudomonadati</taxon>
        <taxon>Pseudomonadota</taxon>
        <taxon>Gammaproteobacteria</taxon>
        <taxon>Moraxellales</taxon>
        <taxon>Moraxellaceae</taxon>
        <taxon>Acinetobacter</taxon>
        <taxon>Acinetobacter calcoaceticus/baumannii complex</taxon>
    </lineage>
</organism>
<reference key="1">
    <citation type="journal article" date="2007" name="Genes Dev.">
        <title>New insights into Acinetobacter baumannii pathogenesis revealed by high-density pyrosequencing and transposon mutagenesis.</title>
        <authorList>
            <person name="Smith M.G."/>
            <person name="Gianoulis T.A."/>
            <person name="Pukatzki S."/>
            <person name="Mekalanos J.J."/>
            <person name="Ornston L.N."/>
            <person name="Gerstein M."/>
            <person name="Snyder M."/>
        </authorList>
    </citation>
    <scope>NUCLEOTIDE SEQUENCE [LARGE SCALE GENOMIC DNA]</scope>
    <source>
        <strain>ATCC 17978 / DSM 105126 / CIP 53.77 / LMG 1025 / NCDC KC755 / 5377</strain>
    </source>
</reference>